<comment type="function">
    <text evidence="3">Pectinolytic enzyme involved in the degradation of xylogalacturonan (xga), a galacturonan backbone heavily substituted with xylose, and which is one important component of the hairy regions of pectin. Activity requires a galacturonic acid backbone substituted with xylose.</text>
</comment>
<comment type="subcellular location">
    <subcellularLocation>
        <location evidence="3">Secreted</location>
    </subcellularLocation>
</comment>
<comment type="similarity">
    <text evidence="4">Belongs to the glycosyl hydrolase 28 family.</text>
</comment>
<gene>
    <name type="primary">xghA</name>
</gene>
<organism>
    <name type="scientific">Aspergillus tubingensis</name>
    <dbReference type="NCBI Taxonomy" id="5068"/>
    <lineage>
        <taxon>Eukaryota</taxon>
        <taxon>Fungi</taxon>
        <taxon>Dikarya</taxon>
        <taxon>Ascomycota</taxon>
        <taxon>Pezizomycotina</taxon>
        <taxon>Eurotiomycetes</taxon>
        <taxon>Eurotiomycetidae</taxon>
        <taxon>Eurotiales</taxon>
        <taxon>Aspergillaceae</taxon>
        <taxon>Aspergillus</taxon>
        <taxon>Aspergillus subgen. Circumdati</taxon>
    </lineage>
</organism>
<name>XGHA_ASPTU</name>
<proteinExistence type="evidence at protein level"/>
<sequence length="406" mass="42071">MALYRNLYLLASLGLSSAAPSKVQRAPDSSIHARAVCTPTAGGDSSTDDVPAITEALSSCGNGGTIVFPEGSTYYLNSVLDLGSCSDCDIQVEGLLKFASDTDYWSGRTAMISVSNVDGLKLRSLTGSGVIDGNGQDAWDLFASDSSYSRPTLLYITGGSNLEISGLRQKNPPNVFNSVKGGATNVVFSNLKMDANSKSDNPPKNTDGFDIGESTYVTITEVTVVNDDDCVAFKPSSNYVTVDTISCTGSHGISVGSLGKSSDDSVKNIYVTGATMINSTKAAGIKTYPSGGDHGTSTVSNVTFNDFTVDNSDYAFQIQSCYGEDDDYCEENPGNAKLTDIVVSSFSGTTSDKYDPVVANLDCGADGTCGISISGFDVKAPSGKSEVLCANTPSDLGVTCTSGASG</sequence>
<feature type="signal peptide" evidence="2">
    <location>
        <begin position="1"/>
        <end position="18"/>
    </location>
</feature>
<feature type="chain" id="PRO_0000394700" description="Endo-xylogalacturonan hydrolase A">
    <location>
        <begin position="19"/>
        <end position="406"/>
    </location>
</feature>
<feature type="repeat" description="PbH1 1">
    <location>
        <begin position="183"/>
        <end position="213"/>
    </location>
</feature>
<feature type="repeat" description="PbH1 2">
    <location>
        <begin position="214"/>
        <end position="257"/>
    </location>
</feature>
<feature type="repeat" description="PbH1 3">
    <location>
        <begin position="266"/>
        <end position="289"/>
    </location>
</feature>
<feature type="repeat" description="PbH1 4">
    <location>
        <begin position="299"/>
        <end position="320"/>
    </location>
</feature>
<feature type="repeat" description="PbH1 5">
    <location>
        <begin position="333"/>
        <end position="375"/>
    </location>
</feature>
<feature type="active site" description="Proton donor" evidence="1">
    <location>
        <position position="228"/>
    </location>
</feature>
<feature type="active site" evidence="1">
    <location>
        <position position="251"/>
    </location>
</feature>
<feature type="glycosylation site" description="N-linked (GlcNAc...) asparagine" evidence="2">
    <location>
        <position position="278"/>
    </location>
</feature>
<feature type="glycosylation site" description="N-linked (GlcNAc...) asparagine" evidence="2">
    <location>
        <position position="301"/>
    </location>
</feature>
<feature type="helix" evidence="5">
    <location>
        <begin position="50"/>
        <end position="60"/>
    </location>
</feature>
<feature type="strand" evidence="5">
    <location>
        <begin position="65"/>
        <end position="68"/>
    </location>
</feature>
<feature type="strand" evidence="5">
    <location>
        <begin position="73"/>
        <end position="76"/>
    </location>
</feature>
<feature type="strand" evidence="5">
    <location>
        <begin position="86"/>
        <end position="92"/>
    </location>
</feature>
<feature type="strand" evidence="5">
    <location>
        <begin position="94"/>
        <end position="98"/>
    </location>
</feature>
<feature type="helix" evidence="5">
    <location>
        <begin position="102"/>
        <end position="105"/>
    </location>
</feature>
<feature type="strand" evidence="5">
    <location>
        <begin position="109"/>
        <end position="116"/>
    </location>
</feature>
<feature type="strand" evidence="5">
    <location>
        <begin position="118"/>
        <end position="123"/>
    </location>
</feature>
<feature type="strand" evidence="5">
    <location>
        <begin position="125"/>
        <end position="127"/>
    </location>
</feature>
<feature type="strand" evidence="5">
    <location>
        <begin position="130"/>
        <end position="132"/>
    </location>
</feature>
<feature type="helix" evidence="5">
    <location>
        <begin position="136"/>
        <end position="144"/>
    </location>
</feature>
<feature type="strand" evidence="5">
    <location>
        <begin position="152"/>
        <end position="158"/>
    </location>
</feature>
<feature type="strand" evidence="5">
    <location>
        <begin position="160"/>
        <end position="166"/>
    </location>
</feature>
<feature type="strand" evidence="5">
    <location>
        <begin position="168"/>
        <end position="170"/>
    </location>
</feature>
<feature type="strand" evidence="5">
    <location>
        <begin position="176"/>
        <end position="180"/>
    </location>
</feature>
<feature type="strand" evidence="5">
    <location>
        <begin position="183"/>
        <end position="194"/>
    </location>
</feature>
<feature type="strand" evidence="5">
    <location>
        <begin position="198"/>
        <end position="201"/>
    </location>
</feature>
<feature type="strand" evidence="5">
    <location>
        <begin position="208"/>
        <end position="211"/>
    </location>
</feature>
<feature type="strand" evidence="5">
    <location>
        <begin position="213"/>
        <end position="225"/>
    </location>
</feature>
<feature type="strand" evidence="5">
    <location>
        <begin position="230"/>
        <end position="233"/>
    </location>
</feature>
<feature type="strand" evidence="5">
    <location>
        <begin position="237"/>
        <end position="249"/>
    </location>
</feature>
<feature type="strand" evidence="5">
    <location>
        <begin position="253"/>
        <end position="258"/>
    </location>
</feature>
<feature type="strand" evidence="5">
    <location>
        <begin position="260"/>
        <end position="262"/>
    </location>
</feature>
<feature type="strand" evidence="5">
    <location>
        <begin position="264"/>
        <end position="278"/>
    </location>
</feature>
<feature type="strand" evidence="5">
    <location>
        <begin position="280"/>
        <end position="287"/>
    </location>
</feature>
<feature type="strand" evidence="5">
    <location>
        <begin position="297"/>
        <end position="321"/>
    </location>
</feature>
<feature type="helix" evidence="5">
    <location>
        <begin position="326"/>
        <end position="331"/>
    </location>
</feature>
<feature type="strand" evidence="5">
    <location>
        <begin position="337"/>
        <end position="350"/>
    </location>
</feature>
<feature type="strand" evidence="5">
    <location>
        <begin position="352"/>
        <end position="354"/>
    </location>
</feature>
<feature type="strand" evidence="5">
    <location>
        <begin position="357"/>
        <end position="362"/>
    </location>
</feature>
<feature type="strand" evidence="5">
    <location>
        <begin position="367"/>
        <end position="376"/>
    </location>
</feature>
<feature type="strand" evidence="5">
    <location>
        <begin position="386"/>
        <end position="391"/>
    </location>
</feature>
<evidence type="ECO:0000250" key="1"/>
<evidence type="ECO:0000255" key="2"/>
<evidence type="ECO:0000269" key="3">
    <source>
    </source>
</evidence>
<evidence type="ECO:0000305" key="4"/>
<evidence type="ECO:0007829" key="5">
    <source>
        <dbReference type="PDB" id="4C2L"/>
    </source>
</evidence>
<reference key="1">
    <citation type="journal article" date="2000" name="Appl. Environ. Microbiol.">
        <title>Endo-xylogalacturonan hydrolase, a novel pectinolytic enzyme.</title>
        <authorList>
            <person name="van der Vlugt-Bergmans C.J."/>
            <person name="Meeuwsen P.J."/>
            <person name="Voragen A.G."/>
            <person name="van Ooyen A.J."/>
        </authorList>
    </citation>
    <scope>NUCLEOTIDE SEQUENCE [MRNA]</scope>
    <scope>SUBCELLULAR LOCATION</scope>
    <scope>FUNCTION</scope>
</reference>
<accession>Q9UUZ2</accession>
<protein>
    <recommendedName>
        <fullName>Endo-xylogalacturonan hydrolase A</fullName>
        <ecNumber>3.2.1.-</ecNumber>
    </recommendedName>
</protein>
<dbReference type="EC" id="3.2.1.-"/>
<dbReference type="EMBL" id="AJ249460">
    <property type="protein sequence ID" value="CAB65657.1"/>
    <property type="molecule type" value="mRNA"/>
</dbReference>
<dbReference type="PDB" id="4C2L">
    <property type="method" value="X-ray"/>
    <property type="resolution" value="1.75 A"/>
    <property type="chains" value="A=19-406"/>
</dbReference>
<dbReference type="PDBsum" id="4C2L"/>
<dbReference type="SMR" id="Q9UUZ2"/>
<dbReference type="CAZy" id="GH28">
    <property type="family name" value="Glycoside Hydrolase Family 28"/>
</dbReference>
<dbReference type="GlyCosmos" id="Q9UUZ2">
    <property type="glycosylation" value="2 sites, No reported glycans"/>
</dbReference>
<dbReference type="VEuPathDB" id="FungiDB:ASPTUDRAFT_784660"/>
<dbReference type="EvolutionaryTrace" id="Q9UUZ2"/>
<dbReference type="GO" id="GO:0005576">
    <property type="term" value="C:extracellular region"/>
    <property type="evidence" value="ECO:0007669"/>
    <property type="project" value="UniProtKB-SubCell"/>
</dbReference>
<dbReference type="GO" id="GO:0004650">
    <property type="term" value="F:polygalacturonase activity"/>
    <property type="evidence" value="ECO:0007669"/>
    <property type="project" value="InterPro"/>
</dbReference>
<dbReference type="GO" id="GO:0071555">
    <property type="term" value="P:cell wall organization"/>
    <property type="evidence" value="ECO:0007669"/>
    <property type="project" value="UniProtKB-KW"/>
</dbReference>
<dbReference type="GO" id="GO:0045490">
    <property type="term" value="P:pectin catabolic process"/>
    <property type="evidence" value="ECO:0007669"/>
    <property type="project" value="UniProtKB-ARBA"/>
</dbReference>
<dbReference type="Gene3D" id="2.160.20.10">
    <property type="entry name" value="Single-stranded right-handed beta-helix, Pectin lyase-like"/>
    <property type="match status" value="1"/>
</dbReference>
<dbReference type="InterPro" id="IPR000743">
    <property type="entry name" value="Glyco_hydro_28"/>
</dbReference>
<dbReference type="InterPro" id="IPR006626">
    <property type="entry name" value="PbH1"/>
</dbReference>
<dbReference type="InterPro" id="IPR012334">
    <property type="entry name" value="Pectin_lyas_fold"/>
</dbReference>
<dbReference type="InterPro" id="IPR011050">
    <property type="entry name" value="Pectin_lyase_fold/virulence"/>
</dbReference>
<dbReference type="PANTHER" id="PTHR31736">
    <property type="match status" value="1"/>
</dbReference>
<dbReference type="PANTHER" id="PTHR31736:SF9">
    <property type="entry name" value="ENDO-XYLOGALACTURONAN HYDROLASE A-RELATED"/>
    <property type="match status" value="1"/>
</dbReference>
<dbReference type="Pfam" id="PF00295">
    <property type="entry name" value="Glyco_hydro_28"/>
    <property type="match status" value="1"/>
</dbReference>
<dbReference type="SMART" id="SM00710">
    <property type="entry name" value="PbH1"/>
    <property type="match status" value="5"/>
</dbReference>
<dbReference type="SUPFAM" id="SSF51126">
    <property type="entry name" value="Pectin lyase-like"/>
    <property type="match status" value="1"/>
</dbReference>
<keyword id="KW-0002">3D-structure</keyword>
<keyword id="KW-0119">Carbohydrate metabolism</keyword>
<keyword id="KW-0961">Cell wall biogenesis/degradation</keyword>
<keyword id="KW-0325">Glycoprotein</keyword>
<keyword id="KW-0326">Glycosidase</keyword>
<keyword id="KW-0378">Hydrolase</keyword>
<keyword id="KW-0624">Polysaccharide degradation</keyword>
<keyword id="KW-0677">Repeat</keyword>
<keyword id="KW-0964">Secreted</keyword>
<keyword id="KW-0732">Signal</keyword>